<organism>
    <name type="scientific">Cronobacter sakazakii (strain ATCC BAA-894)</name>
    <name type="common">Enterobacter sakazakii</name>
    <dbReference type="NCBI Taxonomy" id="290339"/>
    <lineage>
        <taxon>Bacteria</taxon>
        <taxon>Pseudomonadati</taxon>
        <taxon>Pseudomonadota</taxon>
        <taxon>Gammaproteobacteria</taxon>
        <taxon>Enterobacterales</taxon>
        <taxon>Enterobacteriaceae</taxon>
        <taxon>Cronobacter</taxon>
    </lineage>
</organism>
<gene>
    <name evidence="1" type="primary">trmD</name>
    <name type="ordered locus">ESA_00648</name>
</gene>
<reference key="1">
    <citation type="journal article" date="2010" name="PLoS ONE">
        <title>Genome sequence of Cronobacter sakazakii BAA-894 and comparative genomic hybridization analysis with other Cronobacter species.</title>
        <authorList>
            <person name="Kucerova E."/>
            <person name="Clifton S.W."/>
            <person name="Xia X.Q."/>
            <person name="Long F."/>
            <person name="Porwollik S."/>
            <person name="Fulton L."/>
            <person name="Fronick C."/>
            <person name="Minx P."/>
            <person name="Kyung K."/>
            <person name="Warren W."/>
            <person name="Fulton R."/>
            <person name="Feng D."/>
            <person name="Wollam A."/>
            <person name="Shah N."/>
            <person name="Bhonagiri V."/>
            <person name="Nash W.E."/>
            <person name="Hallsworth-Pepin K."/>
            <person name="Wilson R.K."/>
            <person name="McClelland M."/>
            <person name="Forsythe S.J."/>
        </authorList>
    </citation>
    <scope>NUCLEOTIDE SEQUENCE [LARGE SCALE GENOMIC DNA]</scope>
    <source>
        <strain>ATCC BAA-894</strain>
    </source>
</reference>
<protein>
    <recommendedName>
        <fullName evidence="1">tRNA (guanine-N(1)-)-methyltransferase</fullName>
        <ecNumber evidence="1">2.1.1.228</ecNumber>
    </recommendedName>
    <alternativeName>
        <fullName evidence="1">M1G-methyltransferase</fullName>
    </alternativeName>
    <alternativeName>
        <fullName evidence="1">tRNA [GM37] methyltransferase</fullName>
    </alternativeName>
</protein>
<comment type="function">
    <text evidence="1">Specifically methylates guanosine-37 in various tRNAs.</text>
</comment>
<comment type="catalytic activity">
    <reaction evidence="1">
        <text>guanosine(37) in tRNA + S-adenosyl-L-methionine = N(1)-methylguanosine(37) in tRNA + S-adenosyl-L-homocysteine + H(+)</text>
        <dbReference type="Rhea" id="RHEA:36899"/>
        <dbReference type="Rhea" id="RHEA-COMP:10145"/>
        <dbReference type="Rhea" id="RHEA-COMP:10147"/>
        <dbReference type="ChEBI" id="CHEBI:15378"/>
        <dbReference type="ChEBI" id="CHEBI:57856"/>
        <dbReference type="ChEBI" id="CHEBI:59789"/>
        <dbReference type="ChEBI" id="CHEBI:73542"/>
        <dbReference type="ChEBI" id="CHEBI:74269"/>
        <dbReference type="EC" id="2.1.1.228"/>
    </reaction>
</comment>
<comment type="subunit">
    <text evidence="1">Homodimer.</text>
</comment>
<comment type="subcellular location">
    <subcellularLocation>
        <location evidence="1">Cytoplasm</location>
    </subcellularLocation>
</comment>
<comment type="similarity">
    <text evidence="1">Belongs to the RNA methyltransferase TrmD family.</text>
</comment>
<evidence type="ECO:0000255" key="1">
    <source>
        <dbReference type="HAMAP-Rule" id="MF_00605"/>
    </source>
</evidence>
<keyword id="KW-0963">Cytoplasm</keyword>
<keyword id="KW-0489">Methyltransferase</keyword>
<keyword id="KW-1185">Reference proteome</keyword>
<keyword id="KW-0949">S-adenosyl-L-methionine</keyword>
<keyword id="KW-0808">Transferase</keyword>
<keyword id="KW-0819">tRNA processing</keyword>
<feature type="chain" id="PRO_1000006474" description="tRNA (guanine-N(1)-)-methyltransferase">
    <location>
        <begin position="1"/>
        <end position="257"/>
    </location>
</feature>
<feature type="binding site" evidence="1">
    <location>
        <position position="113"/>
    </location>
    <ligand>
        <name>S-adenosyl-L-methionine</name>
        <dbReference type="ChEBI" id="CHEBI:59789"/>
    </ligand>
</feature>
<feature type="binding site" evidence="1">
    <location>
        <begin position="133"/>
        <end position="138"/>
    </location>
    <ligand>
        <name>S-adenosyl-L-methionine</name>
        <dbReference type="ChEBI" id="CHEBI:59789"/>
    </ligand>
</feature>
<sequence>MWIGIISLFPEMFRAITDYGVTGRAVKNGLLSIDSWSPRDFTHDRHRTVDDRPYGGGPGMLMMVQPLRDAIHAAKAAAGEGAKVIYLSPQGRKLDQAGVSELATNEKLILVCGRYEGIDERVIQTEIDEEWSIGDYVLSGGELPAMTLIDSVARFIPGVLGHEASATEDSFADGLLDCPHYTRPEVLEGMEVPPVLLSGNHAEIRRWRLKQSLGRTWLRRPELLENLALTEEQAKLLAEFKTEHAQQQHRHDGTGDA</sequence>
<name>TRMD_CROS8</name>
<dbReference type="EC" id="2.1.1.228" evidence="1"/>
<dbReference type="EMBL" id="CP000783">
    <property type="protein sequence ID" value="ABU75931.1"/>
    <property type="molecule type" value="Genomic_DNA"/>
</dbReference>
<dbReference type="RefSeq" id="WP_004385559.1">
    <property type="nucleotide sequence ID" value="NC_009778.1"/>
</dbReference>
<dbReference type="SMR" id="A7MEG4"/>
<dbReference type="GeneID" id="56729540"/>
<dbReference type="KEGG" id="esa:ESA_00648"/>
<dbReference type="HOGENOM" id="CLU_047363_0_1_6"/>
<dbReference type="Proteomes" id="UP000000260">
    <property type="component" value="Chromosome"/>
</dbReference>
<dbReference type="GO" id="GO:0005829">
    <property type="term" value="C:cytosol"/>
    <property type="evidence" value="ECO:0007669"/>
    <property type="project" value="TreeGrafter"/>
</dbReference>
<dbReference type="GO" id="GO:0052906">
    <property type="term" value="F:tRNA (guanine(37)-N1)-methyltransferase activity"/>
    <property type="evidence" value="ECO:0007669"/>
    <property type="project" value="UniProtKB-UniRule"/>
</dbReference>
<dbReference type="GO" id="GO:0002939">
    <property type="term" value="P:tRNA N1-guanine methylation"/>
    <property type="evidence" value="ECO:0007669"/>
    <property type="project" value="TreeGrafter"/>
</dbReference>
<dbReference type="CDD" id="cd18080">
    <property type="entry name" value="TrmD-like"/>
    <property type="match status" value="1"/>
</dbReference>
<dbReference type="FunFam" id="1.10.1270.20:FF:000001">
    <property type="entry name" value="tRNA (guanine-N(1)-)-methyltransferase"/>
    <property type="match status" value="1"/>
</dbReference>
<dbReference type="FunFam" id="3.40.1280.10:FF:000001">
    <property type="entry name" value="tRNA (guanine-N(1)-)-methyltransferase"/>
    <property type="match status" value="1"/>
</dbReference>
<dbReference type="Gene3D" id="3.40.1280.10">
    <property type="match status" value="1"/>
</dbReference>
<dbReference type="Gene3D" id="1.10.1270.20">
    <property type="entry name" value="tRNA(m1g37)methyltransferase, domain 2"/>
    <property type="match status" value="1"/>
</dbReference>
<dbReference type="HAMAP" id="MF_00605">
    <property type="entry name" value="TrmD"/>
    <property type="match status" value="1"/>
</dbReference>
<dbReference type="InterPro" id="IPR029028">
    <property type="entry name" value="Alpha/beta_knot_MTases"/>
</dbReference>
<dbReference type="InterPro" id="IPR023148">
    <property type="entry name" value="tRNA_m1G_MeTrfase_C_sf"/>
</dbReference>
<dbReference type="InterPro" id="IPR002649">
    <property type="entry name" value="tRNA_m1G_MeTrfase_TrmD"/>
</dbReference>
<dbReference type="InterPro" id="IPR029026">
    <property type="entry name" value="tRNA_m1G_MTases_N"/>
</dbReference>
<dbReference type="InterPro" id="IPR016009">
    <property type="entry name" value="tRNA_MeTrfase_TRMD/TRM10"/>
</dbReference>
<dbReference type="NCBIfam" id="NF000648">
    <property type="entry name" value="PRK00026.1"/>
    <property type="match status" value="1"/>
</dbReference>
<dbReference type="NCBIfam" id="TIGR00088">
    <property type="entry name" value="trmD"/>
    <property type="match status" value="1"/>
</dbReference>
<dbReference type="PANTHER" id="PTHR46417">
    <property type="entry name" value="TRNA (GUANINE-N(1)-)-METHYLTRANSFERASE"/>
    <property type="match status" value="1"/>
</dbReference>
<dbReference type="PANTHER" id="PTHR46417:SF1">
    <property type="entry name" value="TRNA (GUANINE-N(1)-)-METHYLTRANSFERASE"/>
    <property type="match status" value="1"/>
</dbReference>
<dbReference type="Pfam" id="PF01746">
    <property type="entry name" value="tRNA_m1G_MT"/>
    <property type="match status" value="1"/>
</dbReference>
<dbReference type="PIRSF" id="PIRSF000386">
    <property type="entry name" value="tRNA_mtase"/>
    <property type="match status" value="1"/>
</dbReference>
<dbReference type="SUPFAM" id="SSF75217">
    <property type="entry name" value="alpha/beta knot"/>
    <property type="match status" value="1"/>
</dbReference>
<proteinExistence type="inferred from homology"/>
<accession>A7MEG4</accession>